<dbReference type="EC" id="6.1.1.15" evidence="1"/>
<dbReference type="EMBL" id="CP000697">
    <property type="protein sequence ID" value="ABQ30158.1"/>
    <property type="molecule type" value="Genomic_DNA"/>
</dbReference>
<dbReference type="RefSeq" id="WP_007422397.1">
    <property type="nucleotide sequence ID" value="NC_009484.1"/>
</dbReference>
<dbReference type="SMR" id="A5FX26"/>
<dbReference type="STRING" id="349163.Acry_0939"/>
<dbReference type="KEGG" id="acr:Acry_0939"/>
<dbReference type="eggNOG" id="COG0442">
    <property type="taxonomic scope" value="Bacteria"/>
</dbReference>
<dbReference type="HOGENOM" id="CLU_016739_4_2_5"/>
<dbReference type="Proteomes" id="UP000000245">
    <property type="component" value="Chromosome"/>
</dbReference>
<dbReference type="GO" id="GO:0005829">
    <property type="term" value="C:cytosol"/>
    <property type="evidence" value="ECO:0007669"/>
    <property type="project" value="TreeGrafter"/>
</dbReference>
<dbReference type="GO" id="GO:0005524">
    <property type="term" value="F:ATP binding"/>
    <property type="evidence" value="ECO:0007669"/>
    <property type="project" value="UniProtKB-UniRule"/>
</dbReference>
<dbReference type="GO" id="GO:0004827">
    <property type="term" value="F:proline-tRNA ligase activity"/>
    <property type="evidence" value="ECO:0007669"/>
    <property type="project" value="UniProtKB-UniRule"/>
</dbReference>
<dbReference type="GO" id="GO:0006433">
    <property type="term" value="P:prolyl-tRNA aminoacylation"/>
    <property type="evidence" value="ECO:0007669"/>
    <property type="project" value="UniProtKB-UniRule"/>
</dbReference>
<dbReference type="CDD" id="cd00861">
    <property type="entry name" value="ProRS_anticodon_short"/>
    <property type="match status" value="1"/>
</dbReference>
<dbReference type="CDD" id="cd00779">
    <property type="entry name" value="ProRS_core_prok"/>
    <property type="match status" value="1"/>
</dbReference>
<dbReference type="FunFam" id="3.30.930.10:FF:000042">
    <property type="entry name" value="probable proline--tRNA ligase, mitochondrial"/>
    <property type="match status" value="1"/>
</dbReference>
<dbReference type="FunFam" id="3.40.50.800:FF:000032">
    <property type="entry name" value="Proline--tRNA ligase"/>
    <property type="match status" value="1"/>
</dbReference>
<dbReference type="Gene3D" id="3.40.50.800">
    <property type="entry name" value="Anticodon-binding domain"/>
    <property type="match status" value="1"/>
</dbReference>
<dbReference type="Gene3D" id="3.30.930.10">
    <property type="entry name" value="Bira Bifunctional Protein, Domain 2"/>
    <property type="match status" value="1"/>
</dbReference>
<dbReference type="HAMAP" id="MF_01570">
    <property type="entry name" value="Pro_tRNA_synth_type2"/>
    <property type="match status" value="1"/>
</dbReference>
<dbReference type="InterPro" id="IPR002314">
    <property type="entry name" value="aa-tRNA-synt_IIb"/>
</dbReference>
<dbReference type="InterPro" id="IPR006195">
    <property type="entry name" value="aa-tRNA-synth_II"/>
</dbReference>
<dbReference type="InterPro" id="IPR045864">
    <property type="entry name" value="aa-tRNA-synth_II/BPL/LPL"/>
</dbReference>
<dbReference type="InterPro" id="IPR004154">
    <property type="entry name" value="Anticodon-bd"/>
</dbReference>
<dbReference type="InterPro" id="IPR036621">
    <property type="entry name" value="Anticodon-bd_dom_sf"/>
</dbReference>
<dbReference type="InterPro" id="IPR002316">
    <property type="entry name" value="Pro-tRNA-ligase_IIa"/>
</dbReference>
<dbReference type="InterPro" id="IPR004500">
    <property type="entry name" value="Pro-tRNA-synth_IIa_bac-type"/>
</dbReference>
<dbReference type="InterPro" id="IPR050062">
    <property type="entry name" value="Pro-tRNA_synthetase"/>
</dbReference>
<dbReference type="InterPro" id="IPR023716">
    <property type="entry name" value="Prolyl-tRNA_ligase_IIa_type2"/>
</dbReference>
<dbReference type="InterPro" id="IPR044140">
    <property type="entry name" value="ProRS_anticodon_short"/>
</dbReference>
<dbReference type="InterPro" id="IPR033730">
    <property type="entry name" value="ProRS_core_prok"/>
</dbReference>
<dbReference type="NCBIfam" id="NF008979">
    <property type="entry name" value="PRK12325.1"/>
    <property type="match status" value="1"/>
</dbReference>
<dbReference type="NCBIfam" id="TIGR00409">
    <property type="entry name" value="proS_fam_II"/>
    <property type="match status" value="1"/>
</dbReference>
<dbReference type="PANTHER" id="PTHR42753">
    <property type="entry name" value="MITOCHONDRIAL RIBOSOME PROTEIN L39/PROLYL-TRNA LIGASE FAMILY MEMBER"/>
    <property type="match status" value="1"/>
</dbReference>
<dbReference type="PANTHER" id="PTHR42753:SF2">
    <property type="entry name" value="PROLINE--TRNA LIGASE"/>
    <property type="match status" value="1"/>
</dbReference>
<dbReference type="Pfam" id="PF03129">
    <property type="entry name" value="HGTP_anticodon"/>
    <property type="match status" value="1"/>
</dbReference>
<dbReference type="Pfam" id="PF00587">
    <property type="entry name" value="tRNA-synt_2b"/>
    <property type="match status" value="1"/>
</dbReference>
<dbReference type="PRINTS" id="PR01046">
    <property type="entry name" value="TRNASYNTHPRO"/>
</dbReference>
<dbReference type="SUPFAM" id="SSF52954">
    <property type="entry name" value="Class II aaRS ABD-related"/>
    <property type="match status" value="1"/>
</dbReference>
<dbReference type="SUPFAM" id="SSF55681">
    <property type="entry name" value="Class II aaRS and biotin synthetases"/>
    <property type="match status" value="1"/>
</dbReference>
<dbReference type="PROSITE" id="PS50862">
    <property type="entry name" value="AA_TRNA_LIGASE_II"/>
    <property type="match status" value="1"/>
</dbReference>
<keyword id="KW-0030">Aminoacyl-tRNA synthetase</keyword>
<keyword id="KW-0067">ATP-binding</keyword>
<keyword id="KW-0963">Cytoplasm</keyword>
<keyword id="KW-0436">Ligase</keyword>
<keyword id="KW-0547">Nucleotide-binding</keyword>
<keyword id="KW-0648">Protein biosynthesis</keyword>
<keyword id="KW-1185">Reference proteome</keyword>
<evidence type="ECO:0000255" key="1">
    <source>
        <dbReference type="HAMAP-Rule" id="MF_01570"/>
    </source>
</evidence>
<sequence>MRLSRSLIPTLKETPAEAQIVSHRLMLRAGLIRQQSAGIYAWLPAGLRVLHNIANIVREEQARAGSQEILMPTIQSAELWRESGRYDAYGPEMLRIRDRHDREMLYGPTNEEMLTAIMRDSVQSYRDLPQMLYQIQWKFRDEVRPRFGVLRGREFYMKDGYSFDLDYEGAVESYRRMMLAYMRTFKRMGVRAVPMRADTGPIGGNLSHEFHILAPTGESGVFYDSSFETIELGDDAYDYEARADLDAFFDRMTSLYAATDEKHDEAAWAKVPEDRRREGRGIEVGQIFYFGTKYSQAMNFTVVGPDGARLHPEMGSYGIGVSRLTGAIIEASHDEAGIIWPDAIAPFRASILNLRQGDQVTDALCERIYDALGRDALYDDREARAGEKFADADLMGHPWQVIVGPRGAAKGQVELKHRRTGERAELDIESALAKVRV</sequence>
<protein>
    <recommendedName>
        <fullName evidence="1">Proline--tRNA ligase</fullName>
        <ecNumber evidence="1">6.1.1.15</ecNumber>
    </recommendedName>
    <alternativeName>
        <fullName evidence="1">Prolyl-tRNA synthetase</fullName>
        <shortName evidence="1">ProRS</shortName>
    </alternativeName>
</protein>
<comment type="function">
    <text evidence="1">Catalyzes the attachment of proline to tRNA(Pro) in a two-step reaction: proline is first activated by ATP to form Pro-AMP and then transferred to the acceptor end of tRNA(Pro).</text>
</comment>
<comment type="catalytic activity">
    <reaction evidence="1">
        <text>tRNA(Pro) + L-proline + ATP = L-prolyl-tRNA(Pro) + AMP + diphosphate</text>
        <dbReference type="Rhea" id="RHEA:14305"/>
        <dbReference type="Rhea" id="RHEA-COMP:9700"/>
        <dbReference type="Rhea" id="RHEA-COMP:9702"/>
        <dbReference type="ChEBI" id="CHEBI:30616"/>
        <dbReference type="ChEBI" id="CHEBI:33019"/>
        <dbReference type="ChEBI" id="CHEBI:60039"/>
        <dbReference type="ChEBI" id="CHEBI:78442"/>
        <dbReference type="ChEBI" id="CHEBI:78532"/>
        <dbReference type="ChEBI" id="CHEBI:456215"/>
        <dbReference type="EC" id="6.1.1.15"/>
    </reaction>
</comment>
<comment type="subunit">
    <text evidence="1">Homodimer.</text>
</comment>
<comment type="subcellular location">
    <subcellularLocation>
        <location evidence="1">Cytoplasm</location>
    </subcellularLocation>
</comment>
<comment type="similarity">
    <text evidence="1">Belongs to the class-II aminoacyl-tRNA synthetase family. ProS type 2 subfamily.</text>
</comment>
<feature type="chain" id="PRO_1000069176" description="Proline--tRNA ligase">
    <location>
        <begin position="1"/>
        <end position="437"/>
    </location>
</feature>
<proteinExistence type="inferred from homology"/>
<reference key="1">
    <citation type="submission" date="2007-05" db="EMBL/GenBank/DDBJ databases">
        <title>Complete sequence of chromosome of Acidiphilium cryptum JF-5.</title>
        <authorList>
            <consortium name="US DOE Joint Genome Institute"/>
            <person name="Copeland A."/>
            <person name="Lucas S."/>
            <person name="Lapidus A."/>
            <person name="Barry K."/>
            <person name="Detter J.C."/>
            <person name="Glavina del Rio T."/>
            <person name="Hammon N."/>
            <person name="Israni S."/>
            <person name="Dalin E."/>
            <person name="Tice H."/>
            <person name="Pitluck S."/>
            <person name="Sims D."/>
            <person name="Brettin T."/>
            <person name="Bruce D."/>
            <person name="Han C."/>
            <person name="Schmutz J."/>
            <person name="Larimer F."/>
            <person name="Land M."/>
            <person name="Hauser L."/>
            <person name="Kyrpides N."/>
            <person name="Kim E."/>
            <person name="Magnuson T."/>
            <person name="Richardson P."/>
        </authorList>
    </citation>
    <scope>NUCLEOTIDE SEQUENCE [LARGE SCALE GENOMIC DNA]</scope>
    <source>
        <strain>JF-5</strain>
    </source>
</reference>
<organism>
    <name type="scientific">Acidiphilium cryptum (strain JF-5)</name>
    <dbReference type="NCBI Taxonomy" id="349163"/>
    <lineage>
        <taxon>Bacteria</taxon>
        <taxon>Pseudomonadati</taxon>
        <taxon>Pseudomonadota</taxon>
        <taxon>Alphaproteobacteria</taxon>
        <taxon>Acetobacterales</taxon>
        <taxon>Acidocellaceae</taxon>
        <taxon>Acidiphilium</taxon>
    </lineage>
</organism>
<gene>
    <name evidence="1" type="primary">proS</name>
    <name type="ordered locus">Acry_0939</name>
</gene>
<name>SYP_ACICJ</name>
<accession>A5FX26</accession>